<organism>
    <name type="scientific">Tropheryma whipplei (strain TW08/27)</name>
    <name type="common">Whipple's bacillus</name>
    <dbReference type="NCBI Taxonomy" id="218496"/>
    <lineage>
        <taxon>Bacteria</taxon>
        <taxon>Bacillati</taxon>
        <taxon>Actinomycetota</taxon>
        <taxon>Actinomycetes</taxon>
        <taxon>Micrococcales</taxon>
        <taxon>Tropherymataceae</taxon>
        <taxon>Tropheryma</taxon>
    </lineage>
</organism>
<proteinExistence type="inferred from homology"/>
<keyword id="KW-0067">ATP-binding</keyword>
<keyword id="KW-0963">Cytoplasm</keyword>
<keyword id="KW-0436">Ligase</keyword>
<keyword id="KW-0460">Magnesium</keyword>
<keyword id="KW-0479">Metal-binding</keyword>
<keyword id="KW-0547">Nucleotide-binding</keyword>
<keyword id="KW-0658">Purine biosynthesis</keyword>
<evidence type="ECO:0000255" key="1">
    <source>
        <dbReference type="HAMAP-Rule" id="MF_00420"/>
    </source>
</evidence>
<evidence type="ECO:0000256" key="2">
    <source>
        <dbReference type="SAM" id="MobiDB-lite"/>
    </source>
</evidence>
<feature type="chain" id="PRO_0000100505" description="Phosphoribosylformylglycinamidine synthase subunit PurL">
    <location>
        <begin position="1"/>
        <end position="760"/>
    </location>
</feature>
<feature type="region of interest" description="Disordered" evidence="2">
    <location>
        <begin position="1"/>
        <end position="25"/>
    </location>
</feature>
<feature type="active site" evidence="1">
    <location>
        <position position="69"/>
    </location>
</feature>
<feature type="active site" description="Proton acceptor" evidence="1">
    <location>
        <position position="119"/>
    </location>
</feature>
<feature type="binding site" evidence="1">
    <location>
        <position position="72"/>
    </location>
    <ligand>
        <name>ATP</name>
        <dbReference type="ChEBI" id="CHEBI:30616"/>
    </ligand>
</feature>
<feature type="binding site" evidence="1">
    <location>
        <position position="115"/>
    </location>
    <ligand>
        <name>ATP</name>
        <dbReference type="ChEBI" id="CHEBI:30616"/>
    </ligand>
</feature>
<feature type="binding site" evidence="1">
    <location>
        <position position="117"/>
    </location>
    <ligand>
        <name>Mg(2+)</name>
        <dbReference type="ChEBI" id="CHEBI:18420"/>
        <label>1</label>
    </ligand>
</feature>
<feature type="binding site" evidence="1">
    <location>
        <begin position="118"/>
        <end position="121"/>
    </location>
    <ligand>
        <name>substrate</name>
    </ligand>
</feature>
<feature type="binding site" evidence="1">
    <location>
        <position position="140"/>
    </location>
    <ligand>
        <name>substrate</name>
    </ligand>
</feature>
<feature type="binding site" evidence="1">
    <location>
        <position position="141"/>
    </location>
    <ligand>
        <name>Mg(2+)</name>
        <dbReference type="ChEBI" id="CHEBI:18420"/>
        <label>2</label>
    </ligand>
</feature>
<feature type="binding site" evidence="1">
    <location>
        <position position="265"/>
    </location>
    <ligand>
        <name>substrate</name>
    </ligand>
</feature>
<feature type="binding site" evidence="1">
    <location>
        <position position="293"/>
    </location>
    <ligand>
        <name>Mg(2+)</name>
        <dbReference type="ChEBI" id="CHEBI:18420"/>
        <label>2</label>
    </ligand>
</feature>
<feature type="binding site" evidence="1">
    <location>
        <begin position="337"/>
        <end position="339"/>
    </location>
    <ligand>
        <name>substrate</name>
    </ligand>
</feature>
<feature type="binding site" evidence="1">
    <location>
        <position position="519"/>
    </location>
    <ligand>
        <name>ATP</name>
        <dbReference type="ChEBI" id="CHEBI:30616"/>
    </ligand>
</feature>
<feature type="binding site" evidence="1">
    <location>
        <position position="556"/>
    </location>
    <ligand>
        <name>ATP</name>
        <dbReference type="ChEBI" id="CHEBI:30616"/>
    </ligand>
</feature>
<feature type="binding site" evidence="1">
    <location>
        <position position="557"/>
    </location>
    <ligand>
        <name>Mg(2+)</name>
        <dbReference type="ChEBI" id="CHEBI:18420"/>
        <label>1</label>
    </ligand>
</feature>
<feature type="binding site" evidence="1">
    <location>
        <position position="559"/>
    </location>
    <ligand>
        <name>substrate</name>
    </ligand>
</feature>
<name>PURL_TROW8</name>
<gene>
    <name evidence="1" type="primary">purL</name>
    <name type="ordered locus">TW803</name>
</gene>
<sequence length="760" mass="81739">MNMSLPADRDTAKKPSAQKPSAHAQNATAAVDVTALGLTESEYTQICSLLKRSPTKSELAIYSVLWSEHCSYKSSRRHLRQLADLTEVTKKHLLVGIGQNAGVVDIGGGWAAAFKIESHNHPSFIEPFQGAATGIGGIVRDIIAMGAKPVALMDSLRFGAASDPDTQRVADGVVSGISFYGNCLGVPNIGGETAFDPVYQGNPLVNVLCVGVMRRENIRLANASGPGNLVVLFGAPTGRDGIGGASVLASDSFTSDAKANRPAVQIGDPFVEKLLTECCLELYAADLVVAIQDLGAAGISCAASELAHNGRVGIRLDLSAVPLRDTTLAPDEILVSESQERMMAIVHPDNLEAFFEITNRWGISGAVIGEVDNSQYLTVVHEGKTLVRLNPKTLTGPSYNRPVKKPAYLIRRSAANRLPVTNDPHLLREDILQVISCPNLSDKSVITNQYDRYVQGNTALCHPDDAGVIRMYKNTGVALSCDGNSRYSYLDPHAGAQLAVAEAYRNVSVVGATPLAVTNCLNFGNPENPEVMWQFRETCRGLSDACKRLEIPITGGNVSFYNQTDGKDIFPTPVVGILGIVDNLTQTLTSGWNAPDLFIYLLGVTRPEFGGSVWADTMYGHIGGVPPKLDLARESRLSNLLVAGAKKRVFESAHDLSEGGLIQAIVESCLRHGFGADIALDTIRATSLTEALFSESASRVLVSCRSQEDLRDLCRRNSYEYTLIGTTRHTGELTISEIGKFTLNELSDARQKVTRVLFRG</sequence>
<dbReference type="EC" id="6.3.5.3" evidence="1"/>
<dbReference type="EMBL" id="BX251412">
    <property type="protein sequence ID" value="CAD67462.1"/>
    <property type="molecule type" value="Genomic_DNA"/>
</dbReference>
<dbReference type="RefSeq" id="WP_011096740.1">
    <property type="nucleotide sequence ID" value="NC_004551.1"/>
</dbReference>
<dbReference type="SMR" id="Q83H66"/>
<dbReference type="GeneID" id="67388585"/>
<dbReference type="KEGG" id="tws:TW803"/>
<dbReference type="HOGENOM" id="CLU_003100_0_1_11"/>
<dbReference type="UniPathway" id="UPA00074">
    <property type="reaction ID" value="UER00128"/>
</dbReference>
<dbReference type="GO" id="GO:0005737">
    <property type="term" value="C:cytoplasm"/>
    <property type="evidence" value="ECO:0007669"/>
    <property type="project" value="UniProtKB-SubCell"/>
</dbReference>
<dbReference type="GO" id="GO:0005524">
    <property type="term" value="F:ATP binding"/>
    <property type="evidence" value="ECO:0007669"/>
    <property type="project" value="UniProtKB-UniRule"/>
</dbReference>
<dbReference type="GO" id="GO:0000287">
    <property type="term" value="F:magnesium ion binding"/>
    <property type="evidence" value="ECO:0007669"/>
    <property type="project" value="UniProtKB-UniRule"/>
</dbReference>
<dbReference type="GO" id="GO:0004642">
    <property type="term" value="F:phosphoribosylformylglycinamidine synthase activity"/>
    <property type="evidence" value="ECO:0007669"/>
    <property type="project" value="UniProtKB-UniRule"/>
</dbReference>
<dbReference type="GO" id="GO:0006189">
    <property type="term" value="P:'de novo' IMP biosynthetic process"/>
    <property type="evidence" value="ECO:0007669"/>
    <property type="project" value="UniProtKB-UniRule"/>
</dbReference>
<dbReference type="CDD" id="cd02203">
    <property type="entry name" value="PurL_repeat1"/>
    <property type="match status" value="1"/>
</dbReference>
<dbReference type="CDD" id="cd02204">
    <property type="entry name" value="PurL_repeat2"/>
    <property type="match status" value="1"/>
</dbReference>
<dbReference type="FunFam" id="3.30.1330.10:FF:000004">
    <property type="entry name" value="Phosphoribosylformylglycinamidine synthase subunit PurL"/>
    <property type="match status" value="1"/>
</dbReference>
<dbReference type="Gene3D" id="3.90.650.10">
    <property type="entry name" value="PurM-like C-terminal domain"/>
    <property type="match status" value="2"/>
</dbReference>
<dbReference type="Gene3D" id="3.30.1330.10">
    <property type="entry name" value="PurM-like, N-terminal domain"/>
    <property type="match status" value="2"/>
</dbReference>
<dbReference type="HAMAP" id="MF_00420">
    <property type="entry name" value="PurL_2"/>
    <property type="match status" value="1"/>
</dbReference>
<dbReference type="InterPro" id="IPR010074">
    <property type="entry name" value="PRibForGlyAmidine_synth_PurL"/>
</dbReference>
<dbReference type="InterPro" id="IPR041609">
    <property type="entry name" value="PurL_linker"/>
</dbReference>
<dbReference type="InterPro" id="IPR010918">
    <property type="entry name" value="PurM-like_C_dom"/>
</dbReference>
<dbReference type="InterPro" id="IPR036676">
    <property type="entry name" value="PurM-like_C_sf"/>
</dbReference>
<dbReference type="InterPro" id="IPR016188">
    <property type="entry name" value="PurM-like_N"/>
</dbReference>
<dbReference type="InterPro" id="IPR036921">
    <property type="entry name" value="PurM-like_N_sf"/>
</dbReference>
<dbReference type="NCBIfam" id="TIGR01736">
    <property type="entry name" value="FGAM_synth_II"/>
    <property type="match status" value="1"/>
</dbReference>
<dbReference type="NCBIfam" id="NF002290">
    <property type="entry name" value="PRK01213.1"/>
    <property type="match status" value="1"/>
</dbReference>
<dbReference type="PANTHER" id="PTHR43555">
    <property type="entry name" value="PHOSPHORIBOSYLFORMYLGLYCINAMIDINE SYNTHASE SUBUNIT PURL"/>
    <property type="match status" value="1"/>
</dbReference>
<dbReference type="PANTHER" id="PTHR43555:SF1">
    <property type="entry name" value="PHOSPHORIBOSYLFORMYLGLYCINAMIDINE SYNTHASE SUBUNIT PURL"/>
    <property type="match status" value="1"/>
</dbReference>
<dbReference type="Pfam" id="PF00586">
    <property type="entry name" value="AIRS"/>
    <property type="match status" value="2"/>
</dbReference>
<dbReference type="Pfam" id="PF02769">
    <property type="entry name" value="AIRS_C"/>
    <property type="match status" value="2"/>
</dbReference>
<dbReference type="Pfam" id="PF18072">
    <property type="entry name" value="FGAR-AT_linker"/>
    <property type="match status" value="1"/>
</dbReference>
<dbReference type="PIRSF" id="PIRSF001587">
    <property type="entry name" value="FGAM_synthase_II"/>
    <property type="match status" value="1"/>
</dbReference>
<dbReference type="SUPFAM" id="SSF56042">
    <property type="entry name" value="PurM C-terminal domain-like"/>
    <property type="match status" value="2"/>
</dbReference>
<dbReference type="SUPFAM" id="SSF55326">
    <property type="entry name" value="PurM N-terminal domain-like"/>
    <property type="match status" value="2"/>
</dbReference>
<reference key="1">
    <citation type="journal article" date="2003" name="Lancet">
        <title>Sequencing and analysis of the genome of the Whipple's disease bacterium Tropheryma whipplei.</title>
        <authorList>
            <person name="Bentley S.D."/>
            <person name="Maiwald M."/>
            <person name="Murphy L.D."/>
            <person name="Pallen M.J."/>
            <person name="Yeats C.A."/>
            <person name="Dover L.G."/>
            <person name="Norbertczak H.T."/>
            <person name="Besra G.S."/>
            <person name="Quail M.A."/>
            <person name="Harris D.E."/>
            <person name="von Herbay A."/>
            <person name="Goble A."/>
            <person name="Rutter S."/>
            <person name="Squares R."/>
            <person name="Squares S."/>
            <person name="Barrell B.G."/>
            <person name="Parkhill J."/>
            <person name="Relman D.A."/>
        </authorList>
    </citation>
    <scope>NUCLEOTIDE SEQUENCE [LARGE SCALE GENOMIC DNA]</scope>
    <source>
        <strain>TW08/27</strain>
    </source>
</reference>
<accession>Q83H66</accession>
<protein>
    <recommendedName>
        <fullName evidence="1">Phosphoribosylformylglycinamidine synthase subunit PurL</fullName>
        <shortName evidence="1">FGAM synthase</shortName>
        <ecNumber evidence="1">6.3.5.3</ecNumber>
    </recommendedName>
    <alternativeName>
        <fullName evidence="1">Formylglycinamide ribonucleotide amidotransferase subunit II</fullName>
        <shortName evidence="1">FGAR amidotransferase II</shortName>
        <shortName evidence="1">FGAR-AT II</shortName>
    </alternativeName>
    <alternativeName>
        <fullName evidence="1">Glutamine amidotransferase PurL</fullName>
    </alternativeName>
    <alternativeName>
        <fullName evidence="1">Phosphoribosylformylglycinamidine synthase subunit II</fullName>
    </alternativeName>
</protein>
<comment type="function">
    <text evidence="1">Part of the phosphoribosylformylglycinamidine synthase complex involved in the purines biosynthetic pathway. Catalyzes the ATP-dependent conversion of formylglycinamide ribonucleotide (FGAR) and glutamine to yield formylglycinamidine ribonucleotide (FGAM) and glutamate. The FGAM synthase complex is composed of three subunits. PurQ produces an ammonia molecule by converting glutamine to glutamate. PurL transfers the ammonia molecule to FGAR to form FGAM in an ATP-dependent manner. PurS interacts with PurQ and PurL and is thought to assist in the transfer of the ammonia molecule from PurQ to PurL.</text>
</comment>
<comment type="catalytic activity">
    <reaction evidence="1">
        <text>N(2)-formyl-N(1)-(5-phospho-beta-D-ribosyl)glycinamide + L-glutamine + ATP + H2O = 2-formamido-N(1)-(5-O-phospho-beta-D-ribosyl)acetamidine + L-glutamate + ADP + phosphate + H(+)</text>
        <dbReference type="Rhea" id="RHEA:17129"/>
        <dbReference type="ChEBI" id="CHEBI:15377"/>
        <dbReference type="ChEBI" id="CHEBI:15378"/>
        <dbReference type="ChEBI" id="CHEBI:29985"/>
        <dbReference type="ChEBI" id="CHEBI:30616"/>
        <dbReference type="ChEBI" id="CHEBI:43474"/>
        <dbReference type="ChEBI" id="CHEBI:58359"/>
        <dbReference type="ChEBI" id="CHEBI:147286"/>
        <dbReference type="ChEBI" id="CHEBI:147287"/>
        <dbReference type="ChEBI" id="CHEBI:456216"/>
        <dbReference type="EC" id="6.3.5.3"/>
    </reaction>
</comment>
<comment type="pathway">
    <text evidence="1">Purine metabolism; IMP biosynthesis via de novo pathway; 5-amino-1-(5-phospho-D-ribosyl)imidazole from N(2)-formyl-N(1)-(5-phospho-D-ribosyl)glycinamide: step 1/2.</text>
</comment>
<comment type="subunit">
    <text evidence="1">Monomer. Part of the FGAM synthase complex composed of 1 PurL, 1 PurQ and 2 PurS subunits.</text>
</comment>
<comment type="subcellular location">
    <subcellularLocation>
        <location evidence="1">Cytoplasm</location>
    </subcellularLocation>
</comment>
<comment type="similarity">
    <text evidence="1">Belongs to the FGAMS family.</text>
</comment>